<protein>
    <recommendedName>
        <fullName evidence="5">Short-chain dehydrogenase/reductase SAT3</fullName>
        <ecNumber evidence="7">1.-.-.-</ecNumber>
    </recommendedName>
    <alternativeName>
        <fullName evidence="5">Satratoxin biosynthesis SC1 cluster protein 3</fullName>
    </alternativeName>
</protein>
<reference key="1">
    <citation type="journal article" date="2014" name="BMC Genomics">
        <title>Comparative genome sequencing reveals chemotype-specific gene clusters in the toxigenic black mold Stachybotrys.</title>
        <authorList>
            <person name="Semeiks J."/>
            <person name="Borek D."/>
            <person name="Otwinowski Z."/>
            <person name="Grishin N.V."/>
        </authorList>
    </citation>
    <scope>NUCLEOTIDE SEQUENCE [LARGE SCALE GENOMIC DNA]</scope>
    <scope>IDENTIFICATION</scope>
    <scope>FUNCTION</scope>
    <source>
        <strain>CBS 109288 / IBT 7711</strain>
    </source>
</reference>
<name>SAT3_STACB</name>
<proteinExistence type="inferred from homology"/>
<evidence type="ECO:0000250" key="1">
    <source>
        <dbReference type="UniProtKB" id="L0E2Z4"/>
    </source>
</evidence>
<evidence type="ECO:0000250" key="2">
    <source>
        <dbReference type="UniProtKB" id="O93868"/>
    </source>
</evidence>
<evidence type="ECO:0000255" key="3">
    <source>
        <dbReference type="PROSITE-ProRule" id="PRU10001"/>
    </source>
</evidence>
<evidence type="ECO:0000269" key="4">
    <source>
    </source>
</evidence>
<evidence type="ECO:0000303" key="5">
    <source>
    </source>
</evidence>
<evidence type="ECO:0000305" key="6"/>
<evidence type="ECO:0000305" key="7">
    <source>
    </source>
</evidence>
<accession>A0A084B9Z1</accession>
<comment type="function">
    <text evidence="7">Short-chain dehydrogenase/reductase; part of the satratoxin SC1 cluster involved in the biosynthesis of satratoxins, trichothecene mycotoxins that are associated with human food poisonings (PubMed:25015739). Satratoxins are suggested to be made by products of multiple gene clusters (SC1, SC2 and SC3) that encode 21 proteins in all, including polyketide synthases, acetyltransferases, and other enzymes expected to modify the trichothecene skeleton (PubMed:25015739). SC1 encodes 10 proteins, SAT1 to SAT10 (PubMed:25015739). The largest are SAT8, which encodes a putative polyketide synthase (PKS) with a conventional non-reducing architecture, and SAT10, a putative protein containing four ankyrin repeats and thus may be involved in protein scaffolding (PubMed:25015739). The putative short-chain reductase SAT3 may assist the PKS in some capacity (PubMed:25015739). SAT6 contains a secretory lipase domain and acts probably as a trichothecene esterase (PubMed:25015739). SAT5 encodes a putative acetyltransferase, and so, with SAT6, may affect endogenous protection from toxicity (PubMed:25015739). The probable transcription factor SAT9 may regulate the expression of the SC1 cluster (PubMed:25015739). SC2 encodes proteins SAT11 to SAT16, the largest of which encodes the putative reducing PKS SAT13 (PubMed:25015739). SAT11 is a cytochrome P450 monooxygenase, while SAT14 and SAT16 are probable acetyltransferases (PubMed:25015739). The SC2 cluster may be regulated by the transcription factor SAT15 (PubMed:25015739). SC3 is a small cluster that encodes 5 proteins, SAT17 to SAT21 (PubMed:25015739). SAT21 is a putative MFS-type transporter which may have a role in exporting secondary metabolites (PubMed:25015739). The four other proteins putatively encoded in SC3 include the taurine hydroxylase-like protein SAT17, the O-methyltransferase SAT18, the acetyltransferase SAT19, and the Cys6-type zinc finger SAT20, the latter being probably involved in regulation of SC3 expression (PubMed:25015739).</text>
</comment>
<comment type="pathway">
    <text evidence="4">Mycotoxin biosynthesis.</text>
</comment>
<comment type="miscellaneous">
    <text evidence="6">Trichothecenes are sesquiterpenoid toxins that act by inhibiting protein biosynthesis.</text>
</comment>
<comment type="similarity">
    <text evidence="6">Belongs to the short-chain dehydrogenases/reductases (SDR) family.</text>
</comment>
<keyword id="KW-0521">NADP</keyword>
<keyword id="KW-0560">Oxidoreductase</keyword>
<gene>
    <name evidence="5" type="primary">SAT3</name>
    <name type="ORF">S7711_07277</name>
</gene>
<feature type="chain" id="PRO_0000442411" description="Short-chain dehydrogenase/reductase SAT3">
    <location>
        <begin position="1"/>
        <end position="271"/>
    </location>
</feature>
<feature type="active site" description="Proton donor" evidence="2">
    <location>
        <position position="153"/>
    </location>
</feature>
<feature type="active site" description="Proton acceptor" evidence="3">
    <location>
        <position position="168"/>
    </location>
</feature>
<feature type="active site" description="Lowers pKa of active site Tyr" evidence="2">
    <location>
        <position position="172"/>
    </location>
</feature>
<feature type="binding site" evidence="1">
    <location>
        <position position="17"/>
    </location>
    <ligand>
        <name>NADP(+)</name>
        <dbReference type="ChEBI" id="CHEBI:58349"/>
    </ligand>
</feature>
<feature type="binding site" evidence="1">
    <location>
        <position position="40"/>
    </location>
    <ligand>
        <name>NADP(+)</name>
        <dbReference type="ChEBI" id="CHEBI:58349"/>
    </ligand>
</feature>
<feature type="binding site" evidence="2">
    <location>
        <position position="67"/>
    </location>
    <ligand>
        <name>NADP(+)</name>
        <dbReference type="ChEBI" id="CHEBI:58349"/>
    </ligand>
</feature>
<feature type="binding site" evidence="2">
    <location>
        <position position="168"/>
    </location>
    <ligand>
        <name>NADP(+)</name>
        <dbReference type="ChEBI" id="CHEBI:58349"/>
    </ligand>
</feature>
<feature type="binding site" evidence="2">
    <location>
        <position position="172"/>
    </location>
    <ligand>
        <name>NADP(+)</name>
        <dbReference type="ChEBI" id="CHEBI:58349"/>
    </ligand>
</feature>
<feature type="binding site" evidence="1">
    <location>
        <position position="203"/>
    </location>
    <ligand>
        <name>NADP(+)</name>
        <dbReference type="ChEBI" id="CHEBI:58349"/>
    </ligand>
</feature>
<sequence>MSEALIGGGAKKVYILSRRRDVLESAAAKHEGILIPIQCDVTSKASLQSAVDIVTKDSGYVNLLIANSGTLGPTNRLDHDLSIHELRKNVFDNVSFEDFNNTLSVNTTGAYFTMLAFLELLDAGNKNALKGGFGGPSTEGGAPSIQSQVIFTSSLGAYSRDRLSPPAYSASKSALSHLAKHASTNLAKYGIRVNVLAPGLFPSEIATLMTANRDPATENLGDRMFIPARKFGGAEEMGGTVLYLASRAGSYCNGLILVNDGGRLSVMLSEY</sequence>
<dbReference type="EC" id="1.-.-.-" evidence="7"/>
<dbReference type="EMBL" id="KL647604">
    <property type="protein sequence ID" value="KEY74370.1"/>
    <property type="molecule type" value="Genomic_DNA"/>
</dbReference>
<dbReference type="SMR" id="A0A084B9Z1"/>
<dbReference type="HOGENOM" id="CLU_010194_12_1_1"/>
<dbReference type="OrthoDB" id="18303at5125"/>
<dbReference type="Proteomes" id="UP000028045">
    <property type="component" value="Unassembled WGS sequence"/>
</dbReference>
<dbReference type="GO" id="GO:0016491">
    <property type="term" value="F:oxidoreductase activity"/>
    <property type="evidence" value="ECO:0007669"/>
    <property type="project" value="UniProtKB-KW"/>
</dbReference>
<dbReference type="CDD" id="cd05233">
    <property type="entry name" value="SDR_c"/>
    <property type="match status" value="1"/>
</dbReference>
<dbReference type="Gene3D" id="3.40.50.720">
    <property type="entry name" value="NAD(P)-binding Rossmann-like Domain"/>
    <property type="match status" value="1"/>
</dbReference>
<dbReference type="InterPro" id="IPR036291">
    <property type="entry name" value="NAD(P)-bd_dom_sf"/>
</dbReference>
<dbReference type="InterPro" id="IPR002347">
    <property type="entry name" value="SDR_fam"/>
</dbReference>
<dbReference type="InterPro" id="IPR052178">
    <property type="entry name" value="Sec_Metab_Biosynth_SDR"/>
</dbReference>
<dbReference type="PANTHER" id="PTHR43618">
    <property type="entry name" value="7-ALPHA-HYDROXYSTEROID DEHYDROGENASE"/>
    <property type="match status" value="1"/>
</dbReference>
<dbReference type="PANTHER" id="PTHR43618:SF18">
    <property type="entry name" value="SHORT CHAIN DEHYDROGENASE_REDUCTASE FAMILY (AFU_ORTHOLOGUE AFUA_5G12480)"/>
    <property type="match status" value="1"/>
</dbReference>
<dbReference type="Pfam" id="PF00106">
    <property type="entry name" value="adh_short"/>
    <property type="match status" value="1"/>
</dbReference>
<dbReference type="Pfam" id="PF13561">
    <property type="entry name" value="adh_short_C2"/>
    <property type="match status" value="1"/>
</dbReference>
<dbReference type="PRINTS" id="PR00081">
    <property type="entry name" value="GDHRDH"/>
</dbReference>
<dbReference type="SUPFAM" id="SSF51735">
    <property type="entry name" value="NAD(P)-binding Rossmann-fold domains"/>
    <property type="match status" value="1"/>
</dbReference>
<organism>
    <name type="scientific">Stachybotrys chartarum (strain CBS 109288 / IBT 7711)</name>
    <name type="common">Toxic black mold</name>
    <name type="synonym">Stilbospora chartarum</name>
    <dbReference type="NCBI Taxonomy" id="1280523"/>
    <lineage>
        <taxon>Eukaryota</taxon>
        <taxon>Fungi</taxon>
        <taxon>Dikarya</taxon>
        <taxon>Ascomycota</taxon>
        <taxon>Pezizomycotina</taxon>
        <taxon>Sordariomycetes</taxon>
        <taxon>Hypocreomycetidae</taxon>
        <taxon>Hypocreales</taxon>
        <taxon>Stachybotryaceae</taxon>
        <taxon>Stachybotrys</taxon>
    </lineage>
</organism>